<protein>
    <recommendedName>
        <fullName evidence="1">Dihydroxy-acid dehydratase</fullName>
        <shortName evidence="1">DAD</shortName>
        <ecNumber evidence="1">4.2.1.9</ecNumber>
    </recommendedName>
</protein>
<evidence type="ECO:0000255" key="1">
    <source>
        <dbReference type="HAMAP-Rule" id="MF_00012"/>
    </source>
</evidence>
<sequence length="617" mass="67356">MPKYRSFTTTQGRNMSGARSLWRATGMTEKDFTKPIIAVVNSFSQFVPGHIHLQEVGKLICGEIQKSGGVAKEFNTIAIDDGIAMGHSGMLYSLPSRELIADSIEYVVNAHCADAMICISNCDKITPGMLMASLRLNIPSVFISGGPMEAGKIQKNNKTIKIDLVDAIINGGKSHISDDFIKDIEASACPTCGSCSGMFTANSMNCLTEAIGLALPGNGTLLATHIDRKNLFIKSAQIIVKITEDYYKKNNTNVLPRNIANKESFENAMMLDIAMGGSTNTILHLLAAAQEAKVDFKMSNINKLSKKIPHICKVAPSTSLYHVEDVHRAGGVMGILGELNRFNLLHKNTRNILQLNLEETLDEYDIFSTNNPDVINMFQAGPGGIRTTKAYSQNFRWTRLDYDRKNGCIRSCKHAYSQDGGLAILYGNLAKNGCIIKTAGIDAKNYIFSGVAKVYESQEEAASSILNGEIISGDIIVIRYEGPKGGPGMQEMLYPTTYLKSMNLDKTCALITDGRFSGGTSGISIGHISPEAANKGIIALVKNGDIININIPERTIHLNITEKELSHRILQEESKGPLSYKPHSRKRYISSALKAYAFFSTSADQGAVRDYKKISNI</sequence>
<name>ILVD_BUCAT</name>
<dbReference type="EC" id="4.2.1.9" evidence="1"/>
<dbReference type="EMBL" id="CP001158">
    <property type="protein sequence ID" value="ACL30380.1"/>
    <property type="molecule type" value="Genomic_DNA"/>
</dbReference>
<dbReference type="RefSeq" id="WP_009874548.1">
    <property type="nucleotide sequence ID" value="NC_011834.1"/>
</dbReference>
<dbReference type="SMR" id="B8D8B5"/>
<dbReference type="KEGG" id="bau:BUAPTUC7_593"/>
<dbReference type="HOGENOM" id="CLU_014271_4_2_6"/>
<dbReference type="UniPathway" id="UPA00047">
    <property type="reaction ID" value="UER00057"/>
</dbReference>
<dbReference type="UniPathway" id="UPA00049">
    <property type="reaction ID" value="UER00061"/>
</dbReference>
<dbReference type="GO" id="GO:0005829">
    <property type="term" value="C:cytosol"/>
    <property type="evidence" value="ECO:0007669"/>
    <property type="project" value="TreeGrafter"/>
</dbReference>
<dbReference type="GO" id="GO:0051537">
    <property type="term" value="F:2 iron, 2 sulfur cluster binding"/>
    <property type="evidence" value="ECO:0007669"/>
    <property type="project" value="UniProtKB-UniRule"/>
</dbReference>
<dbReference type="GO" id="GO:0004160">
    <property type="term" value="F:dihydroxy-acid dehydratase activity"/>
    <property type="evidence" value="ECO:0007669"/>
    <property type="project" value="UniProtKB-UniRule"/>
</dbReference>
<dbReference type="GO" id="GO:0000287">
    <property type="term" value="F:magnesium ion binding"/>
    <property type="evidence" value="ECO:0007669"/>
    <property type="project" value="UniProtKB-UniRule"/>
</dbReference>
<dbReference type="GO" id="GO:0009097">
    <property type="term" value="P:isoleucine biosynthetic process"/>
    <property type="evidence" value="ECO:0007669"/>
    <property type="project" value="UniProtKB-UniRule"/>
</dbReference>
<dbReference type="GO" id="GO:0009099">
    <property type="term" value="P:L-valine biosynthetic process"/>
    <property type="evidence" value="ECO:0007669"/>
    <property type="project" value="UniProtKB-UniRule"/>
</dbReference>
<dbReference type="FunFam" id="3.50.30.80:FF:000001">
    <property type="entry name" value="Dihydroxy-acid dehydratase"/>
    <property type="match status" value="1"/>
</dbReference>
<dbReference type="Gene3D" id="3.50.30.80">
    <property type="entry name" value="IlvD/EDD C-terminal domain-like"/>
    <property type="match status" value="1"/>
</dbReference>
<dbReference type="HAMAP" id="MF_00012">
    <property type="entry name" value="IlvD"/>
    <property type="match status" value="1"/>
</dbReference>
<dbReference type="InterPro" id="IPR042096">
    <property type="entry name" value="Dihydro-acid_dehy_C"/>
</dbReference>
<dbReference type="InterPro" id="IPR004404">
    <property type="entry name" value="DihydroxyA_deHydtase"/>
</dbReference>
<dbReference type="InterPro" id="IPR020558">
    <property type="entry name" value="DiOHA_6PGluconate_deHydtase_CS"/>
</dbReference>
<dbReference type="InterPro" id="IPR056740">
    <property type="entry name" value="ILV_EDD_C"/>
</dbReference>
<dbReference type="InterPro" id="IPR000581">
    <property type="entry name" value="ILV_EDD_N"/>
</dbReference>
<dbReference type="InterPro" id="IPR037237">
    <property type="entry name" value="IlvD/EDD_N"/>
</dbReference>
<dbReference type="NCBIfam" id="TIGR00110">
    <property type="entry name" value="ilvD"/>
    <property type="match status" value="1"/>
</dbReference>
<dbReference type="NCBIfam" id="NF009103">
    <property type="entry name" value="PRK12448.1"/>
    <property type="match status" value="1"/>
</dbReference>
<dbReference type="PANTHER" id="PTHR43661">
    <property type="entry name" value="D-XYLONATE DEHYDRATASE"/>
    <property type="match status" value="1"/>
</dbReference>
<dbReference type="PANTHER" id="PTHR43661:SF3">
    <property type="entry name" value="D-XYLONATE DEHYDRATASE YAGF-RELATED"/>
    <property type="match status" value="1"/>
</dbReference>
<dbReference type="Pfam" id="PF24877">
    <property type="entry name" value="ILV_EDD_C"/>
    <property type="match status" value="1"/>
</dbReference>
<dbReference type="Pfam" id="PF00920">
    <property type="entry name" value="ILVD_EDD_N"/>
    <property type="match status" value="1"/>
</dbReference>
<dbReference type="SUPFAM" id="SSF143975">
    <property type="entry name" value="IlvD/EDD N-terminal domain-like"/>
    <property type="match status" value="1"/>
</dbReference>
<dbReference type="SUPFAM" id="SSF52016">
    <property type="entry name" value="LeuD/IlvD-like"/>
    <property type="match status" value="1"/>
</dbReference>
<dbReference type="PROSITE" id="PS00886">
    <property type="entry name" value="ILVD_EDD_1"/>
    <property type="match status" value="1"/>
</dbReference>
<dbReference type="PROSITE" id="PS00887">
    <property type="entry name" value="ILVD_EDD_2"/>
    <property type="match status" value="1"/>
</dbReference>
<accession>B8D8B5</accession>
<gene>
    <name evidence="1" type="primary">ilvD</name>
    <name type="ordered locus">BUAPTUC7_593</name>
</gene>
<keyword id="KW-0001">2Fe-2S</keyword>
<keyword id="KW-0028">Amino-acid biosynthesis</keyword>
<keyword id="KW-0100">Branched-chain amino acid biosynthesis</keyword>
<keyword id="KW-0408">Iron</keyword>
<keyword id="KW-0411">Iron-sulfur</keyword>
<keyword id="KW-0456">Lyase</keyword>
<keyword id="KW-0460">Magnesium</keyword>
<keyword id="KW-0479">Metal-binding</keyword>
<reference key="1">
    <citation type="journal article" date="2009" name="Science">
        <title>The dynamics and time scale of ongoing genomic erosion in symbiotic bacteria.</title>
        <authorList>
            <person name="Moran N.A."/>
            <person name="McLaughlin H.J."/>
            <person name="Sorek R."/>
        </authorList>
    </citation>
    <scope>NUCLEOTIDE SEQUENCE [LARGE SCALE GENOMIC DNA]</scope>
    <source>
        <strain>Tuc7</strain>
    </source>
</reference>
<organism>
    <name type="scientific">Buchnera aphidicola subsp. Acyrthosiphon pisum (strain Tuc7)</name>
    <dbReference type="NCBI Taxonomy" id="561501"/>
    <lineage>
        <taxon>Bacteria</taxon>
        <taxon>Pseudomonadati</taxon>
        <taxon>Pseudomonadota</taxon>
        <taxon>Gammaproteobacteria</taxon>
        <taxon>Enterobacterales</taxon>
        <taxon>Erwiniaceae</taxon>
        <taxon>Buchnera</taxon>
    </lineage>
</organism>
<feature type="chain" id="PRO_1000190654" description="Dihydroxy-acid dehydratase">
    <location>
        <begin position="1"/>
        <end position="617"/>
    </location>
</feature>
<feature type="active site" description="Proton acceptor" evidence="1">
    <location>
        <position position="517"/>
    </location>
</feature>
<feature type="binding site" evidence="1">
    <location>
        <position position="81"/>
    </location>
    <ligand>
        <name>Mg(2+)</name>
        <dbReference type="ChEBI" id="CHEBI:18420"/>
    </ligand>
</feature>
<feature type="binding site" evidence="1">
    <location>
        <position position="122"/>
    </location>
    <ligand>
        <name>[2Fe-2S] cluster</name>
        <dbReference type="ChEBI" id="CHEBI:190135"/>
    </ligand>
</feature>
<feature type="binding site" evidence="1">
    <location>
        <position position="123"/>
    </location>
    <ligand>
        <name>Mg(2+)</name>
        <dbReference type="ChEBI" id="CHEBI:18420"/>
    </ligand>
</feature>
<feature type="binding site" description="via carbamate group" evidence="1">
    <location>
        <position position="124"/>
    </location>
    <ligand>
        <name>Mg(2+)</name>
        <dbReference type="ChEBI" id="CHEBI:18420"/>
    </ligand>
</feature>
<feature type="binding site" evidence="1">
    <location>
        <position position="195"/>
    </location>
    <ligand>
        <name>[2Fe-2S] cluster</name>
        <dbReference type="ChEBI" id="CHEBI:190135"/>
    </ligand>
</feature>
<feature type="binding site" evidence="1">
    <location>
        <position position="491"/>
    </location>
    <ligand>
        <name>Mg(2+)</name>
        <dbReference type="ChEBI" id="CHEBI:18420"/>
    </ligand>
</feature>
<feature type="modified residue" description="N6-carboxylysine" evidence="1">
    <location>
        <position position="124"/>
    </location>
</feature>
<proteinExistence type="inferred from homology"/>
<comment type="function">
    <text evidence="1">Functions in the biosynthesis of branched-chain amino acids. Catalyzes the dehydration of (2R,3R)-2,3-dihydroxy-3-methylpentanoate (2,3-dihydroxy-3-methylvalerate) into 2-oxo-3-methylpentanoate (2-oxo-3-methylvalerate) and of (2R)-2,3-dihydroxy-3-methylbutanoate (2,3-dihydroxyisovalerate) into 2-oxo-3-methylbutanoate (2-oxoisovalerate), the penultimate precursor to L-isoleucine and L-valine, respectively.</text>
</comment>
<comment type="catalytic activity">
    <reaction evidence="1">
        <text>(2R)-2,3-dihydroxy-3-methylbutanoate = 3-methyl-2-oxobutanoate + H2O</text>
        <dbReference type="Rhea" id="RHEA:24809"/>
        <dbReference type="ChEBI" id="CHEBI:11851"/>
        <dbReference type="ChEBI" id="CHEBI:15377"/>
        <dbReference type="ChEBI" id="CHEBI:49072"/>
        <dbReference type="EC" id="4.2.1.9"/>
    </reaction>
    <physiologicalReaction direction="left-to-right" evidence="1">
        <dbReference type="Rhea" id="RHEA:24810"/>
    </physiologicalReaction>
</comment>
<comment type="catalytic activity">
    <reaction evidence="1">
        <text>(2R,3R)-2,3-dihydroxy-3-methylpentanoate = (S)-3-methyl-2-oxopentanoate + H2O</text>
        <dbReference type="Rhea" id="RHEA:27694"/>
        <dbReference type="ChEBI" id="CHEBI:15377"/>
        <dbReference type="ChEBI" id="CHEBI:35146"/>
        <dbReference type="ChEBI" id="CHEBI:49258"/>
        <dbReference type="EC" id="4.2.1.9"/>
    </reaction>
    <physiologicalReaction direction="left-to-right" evidence="1">
        <dbReference type="Rhea" id="RHEA:27695"/>
    </physiologicalReaction>
</comment>
<comment type="cofactor">
    <cofactor evidence="1">
        <name>[2Fe-2S] cluster</name>
        <dbReference type="ChEBI" id="CHEBI:190135"/>
    </cofactor>
    <text evidence="1">Binds 1 [2Fe-2S] cluster per subunit. This cluster acts as a Lewis acid cofactor.</text>
</comment>
<comment type="cofactor">
    <cofactor evidence="1">
        <name>Mg(2+)</name>
        <dbReference type="ChEBI" id="CHEBI:18420"/>
    </cofactor>
</comment>
<comment type="pathway">
    <text evidence="1">Amino-acid biosynthesis; L-isoleucine biosynthesis; L-isoleucine from 2-oxobutanoate: step 3/4.</text>
</comment>
<comment type="pathway">
    <text evidence="1">Amino-acid biosynthesis; L-valine biosynthesis; L-valine from pyruvate: step 3/4.</text>
</comment>
<comment type="subunit">
    <text evidence="1">Homodimer.</text>
</comment>
<comment type="similarity">
    <text evidence="1">Belongs to the IlvD/Edd family.</text>
</comment>